<dbReference type="EC" id="2.6.1.52" evidence="1"/>
<dbReference type="EMBL" id="AM421808">
    <property type="protein sequence ID" value="CAM10749.1"/>
    <property type="molecule type" value="Genomic_DNA"/>
</dbReference>
<dbReference type="RefSeq" id="WP_002248102.1">
    <property type="nucleotide sequence ID" value="NC_008767.1"/>
</dbReference>
<dbReference type="SMR" id="A1KV48"/>
<dbReference type="KEGG" id="nmc:NMC1554"/>
<dbReference type="HOGENOM" id="CLU_034866_0_2_4"/>
<dbReference type="UniPathway" id="UPA00135">
    <property type="reaction ID" value="UER00197"/>
</dbReference>
<dbReference type="UniPathway" id="UPA00244">
    <property type="reaction ID" value="UER00311"/>
</dbReference>
<dbReference type="Proteomes" id="UP000002286">
    <property type="component" value="Chromosome"/>
</dbReference>
<dbReference type="GO" id="GO:0005737">
    <property type="term" value="C:cytoplasm"/>
    <property type="evidence" value="ECO:0007669"/>
    <property type="project" value="UniProtKB-SubCell"/>
</dbReference>
<dbReference type="GO" id="GO:0004648">
    <property type="term" value="F:O-phospho-L-serine:2-oxoglutarate aminotransferase activity"/>
    <property type="evidence" value="ECO:0007669"/>
    <property type="project" value="UniProtKB-UniRule"/>
</dbReference>
<dbReference type="GO" id="GO:0030170">
    <property type="term" value="F:pyridoxal phosphate binding"/>
    <property type="evidence" value="ECO:0007669"/>
    <property type="project" value="UniProtKB-UniRule"/>
</dbReference>
<dbReference type="GO" id="GO:0006564">
    <property type="term" value="P:L-serine biosynthetic process"/>
    <property type="evidence" value="ECO:0007669"/>
    <property type="project" value="UniProtKB-UniRule"/>
</dbReference>
<dbReference type="GO" id="GO:0008615">
    <property type="term" value="P:pyridoxine biosynthetic process"/>
    <property type="evidence" value="ECO:0007669"/>
    <property type="project" value="UniProtKB-UniRule"/>
</dbReference>
<dbReference type="CDD" id="cd00611">
    <property type="entry name" value="PSAT_like"/>
    <property type="match status" value="1"/>
</dbReference>
<dbReference type="FunFam" id="3.40.640.10:FF:000010">
    <property type="entry name" value="Phosphoserine aminotransferase"/>
    <property type="match status" value="1"/>
</dbReference>
<dbReference type="FunFam" id="3.90.1150.10:FF:000006">
    <property type="entry name" value="Phosphoserine aminotransferase"/>
    <property type="match status" value="1"/>
</dbReference>
<dbReference type="Gene3D" id="3.90.1150.10">
    <property type="entry name" value="Aspartate Aminotransferase, domain 1"/>
    <property type="match status" value="1"/>
</dbReference>
<dbReference type="Gene3D" id="3.40.640.10">
    <property type="entry name" value="Type I PLP-dependent aspartate aminotransferase-like (Major domain)"/>
    <property type="match status" value="1"/>
</dbReference>
<dbReference type="HAMAP" id="MF_00160">
    <property type="entry name" value="SerC_aminotrans_5"/>
    <property type="match status" value="1"/>
</dbReference>
<dbReference type="InterPro" id="IPR000192">
    <property type="entry name" value="Aminotrans_V_dom"/>
</dbReference>
<dbReference type="InterPro" id="IPR020578">
    <property type="entry name" value="Aminotrans_V_PyrdxlP_BS"/>
</dbReference>
<dbReference type="InterPro" id="IPR022278">
    <property type="entry name" value="Pser_aminoTfrase"/>
</dbReference>
<dbReference type="InterPro" id="IPR015424">
    <property type="entry name" value="PyrdxlP-dep_Trfase"/>
</dbReference>
<dbReference type="InterPro" id="IPR015421">
    <property type="entry name" value="PyrdxlP-dep_Trfase_major"/>
</dbReference>
<dbReference type="InterPro" id="IPR015422">
    <property type="entry name" value="PyrdxlP-dep_Trfase_small"/>
</dbReference>
<dbReference type="NCBIfam" id="NF003764">
    <property type="entry name" value="PRK05355.1"/>
    <property type="match status" value="1"/>
</dbReference>
<dbReference type="NCBIfam" id="TIGR01364">
    <property type="entry name" value="serC_1"/>
    <property type="match status" value="1"/>
</dbReference>
<dbReference type="PANTHER" id="PTHR43247">
    <property type="entry name" value="PHOSPHOSERINE AMINOTRANSFERASE"/>
    <property type="match status" value="1"/>
</dbReference>
<dbReference type="PANTHER" id="PTHR43247:SF1">
    <property type="entry name" value="PHOSPHOSERINE AMINOTRANSFERASE"/>
    <property type="match status" value="1"/>
</dbReference>
<dbReference type="Pfam" id="PF00266">
    <property type="entry name" value="Aminotran_5"/>
    <property type="match status" value="1"/>
</dbReference>
<dbReference type="PIRSF" id="PIRSF000525">
    <property type="entry name" value="SerC"/>
    <property type="match status" value="1"/>
</dbReference>
<dbReference type="SUPFAM" id="SSF53383">
    <property type="entry name" value="PLP-dependent transferases"/>
    <property type="match status" value="1"/>
</dbReference>
<dbReference type="PROSITE" id="PS00595">
    <property type="entry name" value="AA_TRANSFER_CLASS_5"/>
    <property type="match status" value="1"/>
</dbReference>
<protein>
    <recommendedName>
        <fullName evidence="1">Phosphoserine aminotransferase</fullName>
        <ecNumber evidence="1">2.6.1.52</ecNumber>
    </recommendedName>
    <alternativeName>
        <fullName evidence="1">Phosphohydroxythreonine aminotransferase</fullName>
        <shortName evidence="1">PSAT</shortName>
    </alternativeName>
</protein>
<comment type="function">
    <text evidence="1">Catalyzes the reversible conversion of 3-phosphohydroxypyruvate to phosphoserine and of 3-hydroxy-2-oxo-4-phosphonooxybutanoate to phosphohydroxythreonine.</text>
</comment>
<comment type="catalytic activity">
    <reaction evidence="1">
        <text>O-phospho-L-serine + 2-oxoglutarate = 3-phosphooxypyruvate + L-glutamate</text>
        <dbReference type="Rhea" id="RHEA:14329"/>
        <dbReference type="ChEBI" id="CHEBI:16810"/>
        <dbReference type="ChEBI" id="CHEBI:18110"/>
        <dbReference type="ChEBI" id="CHEBI:29985"/>
        <dbReference type="ChEBI" id="CHEBI:57524"/>
        <dbReference type="EC" id="2.6.1.52"/>
    </reaction>
</comment>
<comment type="catalytic activity">
    <reaction evidence="1">
        <text>4-(phosphooxy)-L-threonine + 2-oxoglutarate = (R)-3-hydroxy-2-oxo-4-phosphooxybutanoate + L-glutamate</text>
        <dbReference type="Rhea" id="RHEA:16573"/>
        <dbReference type="ChEBI" id="CHEBI:16810"/>
        <dbReference type="ChEBI" id="CHEBI:29985"/>
        <dbReference type="ChEBI" id="CHEBI:58452"/>
        <dbReference type="ChEBI" id="CHEBI:58538"/>
        <dbReference type="EC" id="2.6.1.52"/>
    </reaction>
</comment>
<comment type="cofactor">
    <cofactor evidence="1">
        <name>pyridoxal 5'-phosphate</name>
        <dbReference type="ChEBI" id="CHEBI:597326"/>
    </cofactor>
    <text evidence="1">Binds 1 pyridoxal phosphate per subunit.</text>
</comment>
<comment type="pathway">
    <text evidence="1">Amino-acid biosynthesis; L-serine biosynthesis; L-serine from 3-phospho-D-glycerate: step 2/3.</text>
</comment>
<comment type="pathway">
    <text evidence="1">Cofactor biosynthesis; pyridoxine 5'-phosphate biosynthesis; pyridoxine 5'-phosphate from D-erythrose 4-phosphate: step 3/5.</text>
</comment>
<comment type="subunit">
    <text evidence="1">Homodimer.</text>
</comment>
<comment type="subcellular location">
    <subcellularLocation>
        <location evidence="1">Cytoplasm</location>
    </subcellularLocation>
</comment>
<comment type="similarity">
    <text evidence="1">Belongs to the class-V pyridoxal-phosphate-dependent aminotransferase family. SerC subfamily.</text>
</comment>
<gene>
    <name evidence="1" type="primary">serC</name>
    <name type="ordered locus">NMC1554</name>
</gene>
<accession>A1KV48</accession>
<reference key="1">
    <citation type="journal article" date="2007" name="PLoS Genet.">
        <title>Meningococcal genetic variation mechanisms viewed through comparative analysis of serogroup C strain FAM18.</title>
        <authorList>
            <person name="Bentley S.D."/>
            <person name="Vernikos G.S."/>
            <person name="Snyder L.A.S."/>
            <person name="Churcher C."/>
            <person name="Arrowsmith C."/>
            <person name="Chillingworth T."/>
            <person name="Cronin A."/>
            <person name="Davis P.H."/>
            <person name="Holroyd N.E."/>
            <person name="Jagels K."/>
            <person name="Maddison M."/>
            <person name="Moule S."/>
            <person name="Rabbinowitsch E."/>
            <person name="Sharp S."/>
            <person name="Unwin L."/>
            <person name="Whitehead S."/>
            <person name="Quail M.A."/>
            <person name="Achtman M."/>
            <person name="Barrell B.G."/>
            <person name="Saunders N.J."/>
            <person name="Parkhill J."/>
        </authorList>
    </citation>
    <scope>NUCLEOTIDE SEQUENCE [LARGE SCALE GENOMIC DNA]</scope>
    <source>
        <strain>ATCC 700532 / DSM 15464 / FAM18</strain>
    </source>
</reference>
<sequence>MSLYPIYNFSAGPAVLPEAVLETARQEMLDYNGTGFPVMAMSHRSEMFLSILHHAEQDLRQLLKVPDNYKILFLQGGATTQFNMAAMNLAHGFRTADAVVTGNWSRIAYEQMSRLTDTEIRLAAHGGEQFDYLDLPPVETWDVAPDSAFVHFAVNETVNGLQYREVPRLSEGMPPLVCDMSSEILSREFDVADYGLIYAGAQKNIGPAGVTVVIVREDLLERCPNDIPDVFNYRSHINRDGMYNTPSTYAIYMSGLVFRWLQAQGGVKKIEAVNRLKAQTLYETIDGSGGFYINRIRPNARSKMNVVFQTRDEELDRRFVLEAELQGLCLLKGYKSVGGMRASIYNAMPLEGVRALADFMRDFQRRYG</sequence>
<evidence type="ECO:0000255" key="1">
    <source>
        <dbReference type="HAMAP-Rule" id="MF_00160"/>
    </source>
</evidence>
<feature type="chain" id="PRO_1000058218" description="Phosphoserine aminotransferase">
    <location>
        <begin position="1"/>
        <end position="368"/>
    </location>
</feature>
<feature type="binding site" evidence="1">
    <location>
        <position position="44"/>
    </location>
    <ligand>
        <name>L-glutamate</name>
        <dbReference type="ChEBI" id="CHEBI:29985"/>
    </ligand>
</feature>
<feature type="binding site" evidence="1">
    <location>
        <begin position="78"/>
        <end position="79"/>
    </location>
    <ligand>
        <name>pyridoxal 5'-phosphate</name>
        <dbReference type="ChEBI" id="CHEBI:597326"/>
    </ligand>
</feature>
<feature type="binding site" evidence="1">
    <location>
        <position position="104"/>
    </location>
    <ligand>
        <name>pyridoxal 5'-phosphate</name>
        <dbReference type="ChEBI" id="CHEBI:597326"/>
    </ligand>
</feature>
<feature type="binding site" evidence="1">
    <location>
        <position position="157"/>
    </location>
    <ligand>
        <name>pyridoxal 5'-phosphate</name>
        <dbReference type="ChEBI" id="CHEBI:597326"/>
    </ligand>
</feature>
<feature type="binding site" evidence="1">
    <location>
        <position position="179"/>
    </location>
    <ligand>
        <name>pyridoxal 5'-phosphate</name>
        <dbReference type="ChEBI" id="CHEBI:597326"/>
    </ligand>
</feature>
<feature type="binding site" evidence="1">
    <location>
        <position position="202"/>
    </location>
    <ligand>
        <name>pyridoxal 5'-phosphate</name>
        <dbReference type="ChEBI" id="CHEBI:597326"/>
    </ligand>
</feature>
<feature type="binding site" evidence="1">
    <location>
        <begin position="244"/>
        <end position="245"/>
    </location>
    <ligand>
        <name>pyridoxal 5'-phosphate</name>
        <dbReference type="ChEBI" id="CHEBI:597326"/>
    </ligand>
</feature>
<feature type="modified residue" description="N6-(pyridoxal phosphate)lysine" evidence="1">
    <location>
        <position position="203"/>
    </location>
</feature>
<organism>
    <name type="scientific">Neisseria meningitidis serogroup C / serotype 2a (strain ATCC 700532 / DSM 15464 / FAM18)</name>
    <dbReference type="NCBI Taxonomy" id="272831"/>
    <lineage>
        <taxon>Bacteria</taxon>
        <taxon>Pseudomonadati</taxon>
        <taxon>Pseudomonadota</taxon>
        <taxon>Betaproteobacteria</taxon>
        <taxon>Neisseriales</taxon>
        <taxon>Neisseriaceae</taxon>
        <taxon>Neisseria</taxon>
    </lineage>
</organism>
<proteinExistence type="inferred from homology"/>
<name>SERC_NEIMF</name>
<keyword id="KW-0028">Amino-acid biosynthesis</keyword>
<keyword id="KW-0032">Aminotransferase</keyword>
<keyword id="KW-0963">Cytoplasm</keyword>
<keyword id="KW-0663">Pyridoxal phosphate</keyword>
<keyword id="KW-0664">Pyridoxine biosynthesis</keyword>
<keyword id="KW-0718">Serine biosynthesis</keyword>
<keyword id="KW-0808">Transferase</keyword>